<accession>Q45UF2</accession>
<organism>
    <name type="scientific">Rotavirus X (strain RVX/Human/China/NADRV-J19/1997/GXP[X])</name>
    <name type="common">RV ADRV-N</name>
    <name type="synonym">Rotavirus (isolate novel adult diarrhea rotavirus-J19)</name>
    <dbReference type="NCBI Taxonomy" id="335103"/>
    <lineage>
        <taxon>Viruses</taxon>
        <taxon>Riboviria</taxon>
        <taxon>Orthornavirae</taxon>
        <taxon>Duplornaviricota</taxon>
        <taxon>Resentoviricetes</taxon>
        <taxon>Reovirales</taxon>
        <taxon>Sedoreoviridae</taxon>
        <taxon>Rotavirus</taxon>
        <taxon>Rotavirus H</taxon>
    </lineage>
</organism>
<organismHost>
    <name type="scientific">Homo sapiens</name>
    <name type="common">Human</name>
    <dbReference type="NCBI Taxonomy" id="9606"/>
</organismHost>
<feature type="chain" id="PRO_0000369863" description="Outer capsid glycoprotein VP7">
    <location>
        <begin position="1"/>
        <end position="258"/>
    </location>
</feature>
<feature type="transmembrane region" description="Helical" evidence="2">
    <location>
        <begin position="1"/>
        <end position="13" status="uncertain"/>
    </location>
</feature>
<feature type="glycosylation site" description="N-linked (GlcNAc...) asparagine; by host" evidence="2">
    <location>
        <position position="42"/>
    </location>
</feature>
<sequence>MLLFIILSVGVDAISYIQNDRSNDLCIVYEMTSFGTSFNNANDSLVKLHKHMGLKYEVCKIESNANALTQMQKCNCIYDDTPQIVVFTNFKKSSLKTLIGTENKCELLPQTTIYTPTVDIESEYFIYGNDVKICYLDKNLLGIGCDATDTTSWLDLDAGLPTNHALDIPEITSDGFKLFAKYSDSFLCQRLMDEPKKQIQFYAEVDNVPSNDVIESSRSWASVWKVVKTVLHFTYHILDLFYGNRRATARMIEHSPLG</sequence>
<proteinExistence type="inferred from homology"/>
<comment type="function">
    <text evidence="1">Outer capsid protein involved in attachment and possibly entry into the host epithelial cell. It is subsequently lost, together with VP4, following virus entry into the host cell. The outer layer contains 780 copies of VP7, grouped as 260 trimers. Rotavirus attachment and entry into the host cell probably involves multiple sequential contacts between the outer capsid proteins VP4 and VP7, and the cell receptors (By similarity).</text>
</comment>
<comment type="subunit">
    <text evidence="1">Homotrimer; in the presence of calcium (By similarity). Acquisition of the capsid outer layer requires a high calcium concentration inside the endoplasmic reticulum. Following cell entry, the low calcium concentration in the cytoplasm is probably responsible for the solubilization of the outer layer (By similarity).</text>
</comment>
<comment type="subcellular location">
    <subcellularLocation>
        <location evidence="3">Virion</location>
    </subcellularLocation>
    <subcellularLocation>
        <location evidence="3">Host rough endoplasmic reticulum membrane</location>
        <topology evidence="3">Single-pass membrane protein</topology>
        <orientation evidence="3">Lumenal side</orientation>
    </subcellularLocation>
    <text evidence="1">Immature double-layered particles assembled in the cytoplasm bud across the membrane of the endoplasmic reticulum, acquiring during this process a transient lipid membrane that is modified with the ER resident viral glycoproteins NSP4 and VP7; these enveloped particles also contain VP4. As the particles move towards the interior of the ER cisternae, the transient lipid membrane and the non-structural protein NSP4 are lost, while the virus surface proteins VP4 and VP7 rearrange to form the outermost virus protein layer, yielding mature infectious triple-layered particles (By similarity).</text>
</comment>
<comment type="similarity">
    <text evidence="3">Belongs to the rotavirus VP7 family.</text>
</comment>
<keyword id="KW-0106">Calcium</keyword>
<keyword id="KW-0167">Capsid protein</keyword>
<keyword id="KW-0325">Glycoprotein</keyword>
<keyword id="KW-1038">Host endoplasmic reticulum</keyword>
<keyword id="KW-1043">Host membrane</keyword>
<keyword id="KW-0472">Membrane</keyword>
<keyword id="KW-1152">Outer capsid protein</keyword>
<keyword id="KW-1185">Reference proteome</keyword>
<keyword id="KW-1146">T=13 icosahedral capsid protein</keyword>
<keyword id="KW-0812">Transmembrane</keyword>
<keyword id="KW-1133">Transmembrane helix</keyword>
<keyword id="KW-0946">Virion</keyword>
<dbReference type="EMBL" id="DQ113905">
    <property type="protein sequence ID" value="AAZ03493.1"/>
    <property type="molecule type" value="Genomic_RNA"/>
</dbReference>
<dbReference type="RefSeq" id="YP_392498.1">
    <property type="nucleotide sequence ID" value="NC_007556.1"/>
</dbReference>
<dbReference type="GeneID" id="5076658"/>
<dbReference type="KEGG" id="vg:5076658"/>
<dbReference type="OrthoDB" id="32622at10239"/>
<dbReference type="Proteomes" id="UP000007663">
    <property type="component" value="Genome"/>
</dbReference>
<dbReference type="GO" id="GO:0044169">
    <property type="term" value="C:host cell rough endoplasmic reticulum membrane"/>
    <property type="evidence" value="ECO:0007669"/>
    <property type="project" value="UniProtKB-SubCell"/>
</dbReference>
<dbReference type="GO" id="GO:0016020">
    <property type="term" value="C:membrane"/>
    <property type="evidence" value="ECO:0007669"/>
    <property type="project" value="UniProtKB-KW"/>
</dbReference>
<dbReference type="GO" id="GO:0039621">
    <property type="term" value="C:T=13 icosahedral viral capsid"/>
    <property type="evidence" value="ECO:0007669"/>
    <property type="project" value="UniProtKB-KW"/>
</dbReference>
<dbReference type="GO" id="GO:0039624">
    <property type="term" value="C:viral outer capsid"/>
    <property type="evidence" value="ECO:0007669"/>
    <property type="project" value="UniProtKB-KW"/>
</dbReference>
<dbReference type="InterPro" id="IPR008818">
    <property type="entry name" value="Rotavirus_VP7"/>
</dbReference>
<dbReference type="Pfam" id="PF05868">
    <property type="entry name" value="Rotavirus_VP7"/>
    <property type="match status" value="1"/>
</dbReference>
<reference key="1">
    <citation type="journal article" date="2008" name="J. Gen. Virol.">
        <title>Molecular characterization of a novel adult diarrhoea rotavirus strain J19 isolated in China and its significance for the evolution and origin of group B rotaviruses.</title>
        <authorList>
            <person name="Jiang S."/>
            <person name="Ji S."/>
            <person name="Tang Q."/>
            <person name="Cui X."/>
            <person name="Yang H."/>
            <person name="Kan B."/>
            <person name="Gao S."/>
        </authorList>
    </citation>
    <scope>NUCLEOTIDE SEQUENCE [GENOMIC RNA]</scope>
</reference>
<name>VP7_ROTJ1</name>
<evidence type="ECO:0000250" key="1"/>
<evidence type="ECO:0000255" key="2"/>
<evidence type="ECO:0000305" key="3"/>
<protein>
    <recommendedName>
        <fullName>Outer capsid glycoprotein VP7</fullName>
    </recommendedName>
</protein>